<organism>
    <name type="scientific">Brucella anthropi (strain ATCC 49188 / DSM 6882 / CCUG 24695 / JCM 21032 / LMG 3331 / NBRC 15819 / NCTC 12168 / Alc 37)</name>
    <name type="common">Ochrobactrum anthropi</name>
    <dbReference type="NCBI Taxonomy" id="439375"/>
    <lineage>
        <taxon>Bacteria</taxon>
        <taxon>Pseudomonadati</taxon>
        <taxon>Pseudomonadota</taxon>
        <taxon>Alphaproteobacteria</taxon>
        <taxon>Hyphomicrobiales</taxon>
        <taxon>Brucellaceae</taxon>
        <taxon>Brucella/Ochrobactrum group</taxon>
        <taxon>Brucella</taxon>
    </lineage>
</organism>
<protein>
    <recommendedName>
        <fullName evidence="1">tRNA N6-adenosine threonylcarbamoyltransferase</fullName>
        <ecNumber evidence="1">2.3.1.234</ecNumber>
    </recommendedName>
    <alternativeName>
        <fullName evidence="1">N6-L-threonylcarbamoyladenine synthase</fullName>
        <shortName evidence="1">t(6)A synthase</shortName>
    </alternativeName>
    <alternativeName>
        <fullName evidence="1">t(6)A37 threonylcarbamoyladenosine biosynthesis protein TsaD</fullName>
    </alternativeName>
    <alternativeName>
        <fullName evidence="1">tRNA threonylcarbamoyladenosine biosynthesis protein TsaD</fullName>
    </alternativeName>
</protein>
<comment type="function">
    <text evidence="1">Required for the formation of a threonylcarbamoyl group on adenosine at position 37 (t(6)A37) in tRNAs that read codons beginning with adenine. Is involved in the transfer of the threonylcarbamoyl moiety of threonylcarbamoyl-AMP (TC-AMP) to the N6 group of A37, together with TsaE and TsaB. TsaD likely plays a direct catalytic role in this reaction.</text>
</comment>
<comment type="catalytic activity">
    <reaction evidence="1">
        <text>L-threonylcarbamoyladenylate + adenosine(37) in tRNA = N(6)-L-threonylcarbamoyladenosine(37) in tRNA + AMP + H(+)</text>
        <dbReference type="Rhea" id="RHEA:37059"/>
        <dbReference type="Rhea" id="RHEA-COMP:10162"/>
        <dbReference type="Rhea" id="RHEA-COMP:10163"/>
        <dbReference type="ChEBI" id="CHEBI:15378"/>
        <dbReference type="ChEBI" id="CHEBI:73682"/>
        <dbReference type="ChEBI" id="CHEBI:74411"/>
        <dbReference type="ChEBI" id="CHEBI:74418"/>
        <dbReference type="ChEBI" id="CHEBI:456215"/>
        <dbReference type="EC" id="2.3.1.234"/>
    </reaction>
</comment>
<comment type="cofactor">
    <cofactor evidence="1">
        <name>Fe(2+)</name>
        <dbReference type="ChEBI" id="CHEBI:29033"/>
    </cofactor>
    <text evidence="1">Binds 1 Fe(2+) ion per subunit.</text>
</comment>
<comment type="subcellular location">
    <subcellularLocation>
        <location evidence="1">Cytoplasm</location>
    </subcellularLocation>
</comment>
<comment type="similarity">
    <text evidence="1">Belongs to the KAE1 / TsaD family.</text>
</comment>
<proteinExistence type="inferred from homology"/>
<dbReference type="EC" id="2.3.1.234" evidence="1"/>
<dbReference type="EMBL" id="CP000758">
    <property type="protein sequence ID" value="ABS13695.1"/>
    <property type="molecule type" value="Genomic_DNA"/>
</dbReference>
<dbReference type="RefSeq" id="WP_012091158.1">
    <property type="nucleotide sequence ID" value="NC_009667.1"/>
</dbReference>
<dbReference type="SMR" id="A6WXJ1"/>
<dbReference type="STRING" id="439375.Oant_0974"/>
<dbReference type="KEGG" id="oan:Oant_0974"/>
<dbReference type="PATRIC" id="fig|439375.7.peg.1020"/>
<dbReference type="eggNOG" id="COG0533">
    <property type="taxonomic scope" value="Bacteria"/>
</dbReference>
<dbReference type="HOGENOM" id="CLU_023208_0_2_5"/>
<dbReference type="PhylomeDB" id="A6WXJ1"/>
<dbReference type="Proteomes" id="UP000002301">
    <property type="component" value="Chromosome 1"/>
</dbReference>
<dbReference type="GO" id="GO:0005737">
    <property type="term" value="C:cytoplasm"/>
    <property type="evidence" value="ECO:0007669"/>
    <property type="project" value="UniProtKB-SubCell"/>
</dbReference>
<dbReference type="GO" id="GO:0005506">
    <property type="term" value="F:iron ion binding"/>
    <property type="evidence" value="ECO:0007669"/>
    <property type="project" value="UniProtKB-UniRule"/>
</dbReference>
<dbReference type="GO" id="GO:0061711">
    <property type="term" value="F:N(6)-L-threonylcarbamoyladenine synthase activity"/>
    <property type="evidence" value="ECO:0007669"/>
    <property type="project" value="UniProtKB-EC"/>
</dbReference>
<dbReference type="GO" id="GO:0002949">
    <property type="term" value="P:tRNA threonylcarbamoyladenosine modification"/>
    <property type="evidence" value="ECO:0007669"/>
    <property type="project" value="UniProtKB-UniRule"/>
</dbReference>
<dbReference type="CDD" id="cd24133">
    <property type="entry name" value="ASKHA_NBD_TsaD_bac"/>
    <property type="match status" value="1"/>
</dbReference>
<dbReference type="FunFam" id="3.30.420.40:FF:000040">
    <property type="entry name" value="tRNA N6-adenosine threonylcarbamoyltransferase"/>
    <property type="match status" value="1"/>
</dbReference>
<dbReference type="Gene3D" id="3.30.420.40">
    <property type="match status" value="2"/>
</dbReference>
<dbReference type="HAMAP" id="MF_01445">
    <property type="entry name" value="TsaD"/>
    <property type="match status" value="1"/>
</dbReference>
<dbReference type="InterPro" id="IPR043129">
    <property type="entry name" value="ATPase_NBD"/>
</dbReference>
<dbReference type="InterPro" id="IPR000905">
    <property type="entry name" value="Gcp-like_dom"/>
</dbReference>
<dbReference type="InterPro" id="IPR017861">
    <property type="entry name" value="KAE1/TsaD"/>
</dbReference>
<dbReference type="InterPro" id="IPR022450">
    <property type="entry name" value="TsaD"/>
</dbReference>
<dbReference type="NCBIfam" id="TIGR00329">
    <property type="entry name" value="gcp_kae1"/>
    <property type="match status" value="1"/>
</dbReference>
<dbReference type="NCBIfam" id="TIGR03723">
    <property type="entry name" value="T6A_TsaD_YgjD"/>
    <property type="match status" value="1"/>
</dbReference>
<dbReference type="PANTHER" id="PTHR11735">
    <property type="entry name" value="TRNA N6-ADENOSINE THREONYLCARBAMOYLTRANSFERASE"/>
    <property type="match status" value="1"/>
</dbReference>
<dbReference type="PANTHER" id="PTHR11735:SF6">
    <property type="entry name" value="TRNA N6-ADENOSINE THREONYLCARBAMOYLTRANSFERASE, MITOCHONDRIAL"/>
    <property type="match status" value="1"/>
</dbReference>
<dbReference type="Pfam" id="PF00814">
    <property type="entry name" value="TsaD"/>
    <property type="match status" value="1"/>
</dbReference>
<dbReference type="PRINTS" id="PR00789">
    <property type="entry name" value="OSIALOPTASE"/>
</dbReference>
<dbReference type="SUPFAM" id="SSF53067">
    <property type="entry name" value="Actin-like ATPase domain"/>
    <property type="match status" value="2"/>
</dbReference>
<sequence length="359" mass="37852">MRILGIETSCDETAAAIVERDGQGEGRILSNVVLSQIAEHEPYGGVVPEIAARAHVEALDRLVARALEDADMKLADVDAVAATAGPGLIGGLIVGLMTAKALAMAAQKPFYAVNHLEGHALTARLTDGLPFPYLLLLVSGGHTQMVLIRGIGDYERLGTTIDDALGEAFDKTAKLLGLPYPGGPAVERMALQGNPKRFALPRPLKGEARLDFSFSGLKTAVRQTATELVPLSDQDVADICASFQAAVADTLSDRVGRSLERFRNEFPDCETPALVVAGGVAANKTLRAALETLCARHGFSFIAPPLDLCTDNAAMIAWAGAERAATEAPDSLDLAPRSRWPLDEKSAPLIGTGRRGAKA</sequence>
<evidence type="ECO:0000255" key="1">
    <source>
        <dbReference type="HAMAP-Rule" id="MF_01445"/>
    </source>
</evidence>
<evidence type="ECO:0000256" key="2">
    <source>
        <dbReference type="SAM" id="MobiDB-lite"/>
    </source>
</evidence>
<accession>A6WXJ1</accession>
<name>TSAD_BRUA4</name>
<reference key="1">
    <citation type="journal article" date="2011" name="J. Bacteriol.">
        <title>Genome of Ochrobactrum anthropi ATCC 49188 T, a versatile opportunistic pathogen and symbiont of several eukaryotic hosts.</title>
        <authorList>
            <person name="Chain P.S."/>
            <person name="Lang D.M."/>
            <person name="Comerci D.J."/>
            <person name="Malfatti S.A."/>
            <person name="Vergez L.M."/>
            <person name="Shin M."/>
            <person name="Ugalde R.A."/>
            <person name="Garcia E."/>
            <person name="Tolmasky M.E."/>
        </authorList>
    </citation>
    <scope>NUCLEOTIDE SEQUENCE [LARGE SCALE GENOMIC DNA]</scope>
    <source>
        <strain>ATCC 49188 / DSM 6882 / CCUG 24695 / JCM 21032 / LMG 3331 / NBRC 15819 / NCTC 12168 / Alc 37</strain>
    </source>
</reference>
<feature type="chain" id="PRO_1000024439" description="tRNA N6-adenosine threonylcarbamoyltransferase">
    <location>
        <begin position="1"/>
        <end position="359"/>
    </location>
</feature>
<feature type="region of interest" description="Disordered" evidence="2">
    <location>
        <begin position="328"/>
        <end position="359"/>
    </location>
</feature>
<feature type="binding site" evidence="1">
    <location>
        <position position="115"/>
    </location>
    <ligand>
        <name>Fe cation</name>
        <dbReference type="ChEBI" id="CHEBI:24875"/>
    </ligand>
</feature>
<feature type="binding site" evidence="1">
    <location>
        <position position="119"/>
    </location>
    <ligand>
        <name>Fe cation</name>
        <dbReference type="ChEBI" id="CHEBI:24875"/>
    </ligand>
</feature>
<feature type="binding site" evidence="1">
    <location>
        <begin position="137"/>
        <end position="141"/>
    </location>
    <ligand>
        <name>substrate</name>
    </ligand>
</feature>
<feature type="binding site" evidence="1">
    <location>
        <position position="170"/>
    </location>
    <ligand>
        <name>substrate</name>
    </ligand>
</feature>
<feature type="binding site" evidence="1">
    <location>
        <position position="183"/>
    </location>
    <ligand>
        <name>substrate</name>
    </ligand>
</feature>
<feature type="binding site" evidence="1">
    <location>
        <position position="283"/>
    </location>
    <ligand>
        <name>substrate</name>
    </ligand>
</feature>
<feature type="binding site" evidence="1">
    <location>
        <position position="311"/>
    </location>
    <ligand>
        <name>Fe cation</name>
        <dbReference type="ChEBI" id="CHEBI:24875"/>
    </ligand>
</feature>
<keyword id="KW-0012">Acyltransferase</keyword>
<keyword id="KW-0963">Cytoplasm</keyword>
<keyword id="KW-0408">Iron</keyword>
<keyword id="KW-0479">Metal-binding</keyword>
<keyword id="KW-1185">Reference proteome</keyword>
<keyword id="KW-0808">Transferase</keyword>
<keyword id="KW-0819">tRNA processing</keyword>
<gene>
    <name evidence="1" type="primary">tsaD</name>
    <name type="synonym">gcp</name>
    <name type="ordered locus">Oant_0974</name>
</gene>